<accession>Q9FGV1</accession>
<accession>A8MQI4</accession>
<accession>Q5IRX7</accession>
<accession>Q9ZTR9</accession>
<organism>
    <name type="scientific">Arabidopsis thaliana</name>
    <name type="common">Mouse-ear cress</name>
    <dbReference type="NCBI Taxonomy" id="3702"/>
    <lineage>
        <taxon>Eukaryota</taxon>
        <taxon>Viridiplantae</taxon>
        <taxon>Streptophyta</taxon>
        <taxon>Embryophyta</taxon>
        <taxon>Tracheophyta</taxon>
        <taxon>Spermatophyta</taxon>
        <taxon>Magnoliopsida</taxon>
        <taxon>eudicotyledons</taxon>
        <taxon>Gunneridae</taxon>
        <taxon>Pentapetalae</taxon>
        <taxon>rosids</taxon>
        <taxon>malvids</taxon>
        <taxon>Brassicales</taxon>
        <taxon>Brassicaceae</taxon>
        <taxon>Camelineae</taxon>
        <taxon>Arabidopsis</taxon>
    </lineage>
</organism>
<protein>
    <recommendedName>
        <fullName>Auxin response factor 8</fullName>
    </recommendedName>
    <alternativeName>
        <fullName>Protein FRUIT WITHOUT FERTILIZATION</fullName>
    </alternativeName>
</protein>
<dbReference type="EMBL" id="AF042196">
    <property type="protein sequence ID" value="AAD02219.1"/>
    <property type="molecule type" value="mRNA"/>
</dbReference>
<dbReference type="EMBL" id="AY669790">
    <property type="protein sequence ID" value="AAT67074.1"/>
    <property type="molecule type" value="mRNA"/>
</dbReference>
<dbReference type="EMBL" id="AB024026">
    <property type="protein sequence ID" value="BAB08972.1"/>
    <property type="status" value="ALT_SEQ"/>
    <property type="molecule type" value="Genomic_DNA"/>
</dbReference>
<dbReference type="EMBL" id="CP002688">
    <property type="protein sequence ID" value="AED94137.1"/>
    <property type="molecule type" value="Genomic_DNA"/>
</dbReference>
<dbReference type="EMBL" id="CP002688">
    <property type="protein sequence ID" value="AED94138.1"/>
    <property type="molecule type" value="Genomic_DNA"/>
</dbReference>
<dbReference type="RefSeq" id="NP_001078672.1">
    <molecule id="Q9FGV1-2"/>
    <property type="nucleotide sequence ID" value="NM_001085203.1"/>
</dbReference>
<dbReference type="RefSeq" id="NP_198518.1">
    <molecule id="Q9FGV1-1"/>
    <property type="nucleotide sequence ID" value="NM_123060.3"/>
</dbReference>
<dbReference type="SMR" id="Q9FGV1"/>
<dbReference type="BioGRID" id="18923">
    <property type="interactions" value="32"/>
</dbReference>
<dbReference type="FunCoup" id="Q9FGV1">
    <property type="interactions" value="593"/>
</dbReference>
<dbReference type="IntAct" id="Q9FGV1">
    <property type="interactions" value="28"/>
</dbReference>
<dbReference type="STRING" id="3702.Q9FGV1"/>
<dbReference type="GlyGen" id="Q9FGV1">
    <property type="glycosylation" value="4 sites, 1 O-linked glycan (4 sites)"/>
</dbReference>
<dbReference type="PaxDb" id="3702-AT5G37020.1"/>
<dbReference type="ProteomicsDB" id="245183">
    <molecule id="Q9FGV1-1"/>
</dbReference>
<dbReference type="EnsemblPlants" id="AT5G37020.1">
    <molecule id="Q9FGV1-1"/>
    <property type="protein sequence ID" value="AT5G37020.1"/>
    <property type="gene ID" value="AT5G37020"/>
</dbReference>
<dbReference type="EnsemblPlants" id="AT5G37020.2">
    <molecule id="Q9FGV1-2"/>
    <property type="protein sequence ID" value="AT5G37020.2"/>
    <property type="gene ID" value="AT5G37020"/>
</dbReference>
<dbReference type="GeneID" id="833672"/>
<dbReference type="Gramene" id="AT5G37020.1">
    <molecule id="Q9FGV1-1"/>
    <property type="protein sequence ID" value="AT5G37020.1"/>
    <property type="gene ID" value="AT5G37020"/>
</dbReference>
<dbReference type="Gramene" id="AT5G37020.2">
    <molecule id="Q9FGV1-2"/>
    <property type="protein sequence ID" value="AT5G37020.2"/>
    <property type="gene ID" value="AT5G37020"/>
</dbReference>
<dbReference type="KEGG" id="ath:AT5G37020"/>
<dbReference type="Araport" id="AT5G37020"/>
<dbReference type="TAIR" id="AT5G37020">
    <property type="gene designation" value="ARF8"/>
</dbReference>
<dbReference type="eggNOG" id="ENOG502QPWF">
    <property type="taxonomic scope" value="Eukaryota"/>
</dbReference>
<dbReference type="InParanoid" id="Q9FGV1"/>
<dbReference type="PhylomeDB" id="Q9FGV1"/>
<dbReference type="PRO" id="PR:Q9FGV1"/>
<dbReference type="Proteomes" id="UP000006548">
    <property type="component" value="Chromosome 5"/>
</dbReference>
<dbReference type="ExpressionAtlas" id="Q9FGV1">
    <property type="expression patterns" value="baseline and differential"/>
</dbReference>
<dbReference type="GO" id="GO:0005634">
    <property type="term" value="C:nucleus"/>
    <property type="evidence" value="ECO:0007669"/>
    <property type="project" value="UniProtKB-SubCell"/>
</dbReference>
<dbReference type="GO" id="GO:0003700">
    <property type="term" value="F:DNA-binding transcription factor activity"/>
    <property type="evidence" value="ECO:0000250"/>
    <property type="project" value="TAIR"/>
</dbReference>
<dbReference type="GO" id="GO:0000976">
    <property type="term" value="F:transcription cis-regulatory region binding"/>
    <property type="evidence" value="ECO:0000353"/>
    <property type="project" value="TAIR"/>
</dbReference>
<dbReference type="GO" id="GO:0009734">
    <property type="term" value="P:auxin-activated signaling pathway"/>
    <property type="evidence" value="ECO:0007669"/>
    <property type="project" value="UniProtKB-KW"/>
</dbReference>
<dbReference type="GO" id="GO:0009908">
    <property type="term" value="P:flower development"/>
    <property type="evidence" value="ECO:0000316"/>
    <property type="project" value="TAIR"/>
</dbReference>
<dbReference type="GO" id="GO:0010154">
    <property type="term" value="P:fruit development"/>
    <property type="evidence" value="ECO:0000315"/>
    <property type="project" value="TAIR"/>
</dbReference>
<dbReference type="GO" id="GO:0009733">
    <property type="term" value="P:response to auxin"/>
    <property type="evidence" value="ECO:0000315"/>
    <property type="project" value="TAIR"/>
</dbReference>
<dbReference type="CDD" id="cd10017">
    <property type="entry name" value="B3_DNA"/>
    <property type="match status" value="1"/>
</dbReference>
<dbReference type="FunFam" id="2.30.30.1040:FF:000001">
    <property type="entry name" value="Auxin response factor"/>
    <property type="match status" value="1"/>
</dbReference>
<dbReference type="FunFam" id="2.40.330.10:FF:000001">
    <property type="entry name" value="Auxin response factor"/>
    <property type="match status" value="1"/>
</dbReference>
<dbReference type="FunFam" id="3.10.20.90:FF:000047">
    <property type="entry name" value="Auxin response factor"/>
    <property type="match status" value="1"/>
</dbReference>
<dbReference type="Gene3D" id="2.30.30.1040">
    <property type="match status" value="1"/>
</dbReference>
<dbReference type="Gene3D" id="2.40.330.10">
    <property type="entry name" value="DNA-binding pseudobarrel domain"/>
    <property type="match status" value="1"/>
</dbReference>
<dbReference type="Gene3D" id="3.10.20.90">
    <property type="entry name" value="Phosphatidylinositol 3-kinase Catalytic Subunit, Chain A, domain 1"/>
    <property type="match status" value="1"/>
</dbReference>
<dbReference type="InterPro" id="IPR010525">
    <property type="entry name" value="ARF_dom"/>
</dbReference>
<dbReference type="InterPro" id="IPR044835">
    <property type="entry name" value="ARF_plant"/>
</dbReference>
<dbReference type="InterPro" id="IPR003340">
    <property type="entry name" value="B3_DNA-bd"/>
</dbReference>
<dbReference type="InterPro" id="IPR015300">
    <property type="entry name" value="DNA-bd_pseudobarrel_sf"/>
</dbReference>
<dbReference type="InterPro" id="IPR053793">
    <property type="entry name" value="PB1-like"/>
</dbReference>
<dbReference type="PANTHER" id="PTHR31384">
    <property type="entry name" value="AUXIN RESPONSE FACTOR 4-RELATED"/>
    <property type="match status" value="1"/>
</dbReference>
<dbReference type="PANTHER" id="PTHR31384:SF3">
    <property type="entry name" value="AUXIN RESPONSE FACTOR 8"/>
    <property type="match status" value="1"/>
</dbReference>
<dbReference type="Pfam" id="PF06507">
    <property type="entry name" value="ARF_AD"/>
    <property type="match status" value="1"/>
</dbReference>
<dbReference type="Pfam" id="PF02362">
    <property type="entry name" value="B3"/>
    <property type="match status" value="1"/>
</dbReference>
<dbReference type="SMART" id="SM01019">
    <property type="entry name" value="B3"/>
    <property type="match status" value="1"/>
</dbReference>
<dbReference type="SUPFAM" id="SSF54277">
    <property type="entry name" value="CAD &amp; PB1 domains"/>
    <property type="match status" value="1"/>
</dbReference>
<dbReference type="SUPFAM" id="SSF101936">
    <property type="entry name" value="DNA-binding pseudobarrel domain"/>
    <property type="match status" value="1"/>
</dbReference>
<dbReference type="PROSITE" id="PS50863">
    <property type="entry name" value="B3"/>
    <property type="match status" value="1"/>
</dbReference>
<dbReference type="PROSITE" id="PS51745">
    <property type="entry name" value="PB1"/>
    <property type="match status" value="1"/>
</dbReference>
<feature type="chain" id="PRO_0000111512" description="Auxin response factor 8">
    <location>
        <begin position="1"/>
        <end position="811"/>
    </location>
</feature>
<feature type="domain" description="PB1" evidence="3">
    <location>
        <begin position="705"/>
        <end position="789"/>
    </location>
</feature>
<feature type="DNA-binding region" description="TF-B3" evidence="2">
    <location>
        <begin position="126"/>
        <end position="228"/>
    </location>
</feature>
<feature type="region of interest" description="Disordered" evidence="4">
    <location>
        <begin position="467"/>
        <end position="496"/>
    </location>
</feature>
<feature type="region of interest" description="Disordered" evidence="4">
    <location>
        <begin position="544"/>
        <end position="565"/>
    </location>
</feature>
<feature type="compositionally biased region" description="Polar residues" evidence="4">
    <location>
        <begin position="469"/>
        <end position="482"/>
    </location>
</feature>
<feature type="compositionally biased region" description="Polar residues" evidence="4">
    <location>
        <begin position="544"/>
        <end position="555"/>
    </location>
</feature>
<feature type="splice variant" id="VSP_037313" description="In isoform 2." evidence="10">
    <location>
        <begin position="774"/>
        <end position="811"/>
    </location>
</feature>
<comment type="function">
    <text evidence="6 7 8">Auxin response factors (ARFs) are transcriptional factors that bind specifically to the DNA sequence 5'-TGTCTC-3' found in the auxin-responsive promoter elements (AuxREs). Seems to act as transcriptional activator. Formation of heterodimers with Aux/IAA proteins may alter their ability to modulate early auxin response genes expression. Regulates both stamen and gynoecium maturation. Promotes jasmonic acid production. Partially redundant with ARF6. Involved in fruit initiation. Acts as an inhibitor to stop further carpel development in the absence of fertilization and the generation of signals required to initiate fruit and seed development.</text>
</comment>
<comment type="subunit">
    <text evidence="1">Homodimers and heterodimers.</text>
</comment>
<comment type="interaction">
    <interactant intactId="EBI-1554169">
        <id>Q9FGV1</id>
    </interactant>
    <interactant intactId="EBI-632257">
        <id>O24409</id>
        <label>IAA19</label>
    </interactant>
    <organismsDiffer>false</organismsDiffer>
    <experiments>4</experiments>
</comment>
<comment type="interaction">
    <interactant intactId="EBI-1554169">
        <id>Q9FGV1</id>
    </interactant>
    <interactant intactId="EBI-632343">
        <id>P49678</id>
        <label>IAA2</label>
    </interactant>
    <organismsDiffer>false</organismsDiffer>
    <experiments>3</experiments>
</comment>
<comment type="subcellular location">
    <subcellularLocation>
        <location>Nucleus</location>
    </subcellularLocation>
</comment>
<comment type="alternative products">
    <event type="alternative splicing"/>
    <isoform>
        <id>Q9FGV1-1</id>
        <name>1</name>
        <sequence type="displayed"/>
    </isoform>
    <isoform>
        <id>Q9FGV1-2</id>
        <name>2</name>
        <sequence type="described" ref="VSP_037313"/>
    </isoform>
</comment>
<comment type="tissue specificity">
    <text evidence="5">Expressed in the whole plant.</text>
</comment>
<comment type="developmental stage">
    <text evidence="7 8">Expressed in sepals at stages 11, 12 and 13 of flower development. Highly expressed in petals at stages 9-10, decreases at stage 11 and disappears after flower stage 12. In anthers, expressed at stage 11 in the tapetum, disappears early in stage 12 when the tapetum degrades and reappears throughout the anther late in stage 12 to persist at least until stage 13. In stamen filaments, expressed at stages 12 to 13, especially near the apical end of the filament. Expressed throughout the gynoecium at early stages up to stage 12, especially strongly in ovules. Expression in gynoecium decreases late in stage 12, but persists through stage 13, especially near the apical end including the style. Expressed in the mesocarp of the fruit and the carpel septum during fruit growth.</text>
</comment>
<comment type="induction">
    <text evidence="9">Repressed by miR167.</text>
</comment>
<comment type="domain">
    <text>Interactions between auxin response factors (ARFs) and Aux/IAA proteins occur through their C-terminal dimerization domains III and IV.</text>
</comment>
<comment type="disruption phenotype">
    <text evidence="8">Seedless (parthenocarpic) fruit.</text>
</comment>
<comment type="miscellaneous">
    <molecule>Isoform 2</molecule>
    <text evidence="10">May be due to a competing donor splice site.</text>
</comment>
<comment type="similarity">
    <text evidence="10">Belongs to the ARF family.</text>
</comment>
<comment type="sequence caution" evidence="10">
    <conflict type="erroneous gene model prediction">
        <sequence resource="EMBL-CDS" id="BAB08972"/>
    </conflict>
</comment>
<sequence>MKLSTSGLGQQGHEGEKCLNSELWHACAGPLVSLPSSGSRVVYFPQGHSEQVAATTNKEVDGHIPNYPSLPPQLICQLHNVTMHADVETDEVYAQMTLQPLTPEEQKETFVPIELGIPSKQPSNYFCKTLTASDTSTHGGFSVPRRAAEKVFPPLDYTLQPPAQELIARDLHDVEWKFRHIFRGQPKRHLLTTGWSVFVSAKRLVAGDSVIFIRNEKNQLFLGIRHATRPQTIVPSSVLSSDSMHIGLLAAAAHASATNSCFTVFFHPRASQSEFVIQLSKYIKAVFHTRISVGMRFRMLFETEESSVRRYMGTITGISDLDSVRWPNSHWRSVKVGWDESTAGERQPRVSLWEIEPLTTFPMYPSLFPLRLKRPWHAGTSSLPDGRGDLGSGLTWLRGGGGEQQGLLPLNYPSVGLFPWMQQRLDLSQMGTDNNQQYQAMLAAGLQNIGGGDPLRQQFVQLQEPHHQYLQQSASHNSDLMLQQQQQQQASRHLMHAQTQIMSENLPQQNMRQEVSNQPAGQQQQLQQPDQNAYLNAFKMQNGHLQQWQQQSEMPSPSFMKSDFTDSSNKFATTASPASGDGNLLNFSITGQSVLPEQLTTEGWSPKASNTFSEPLSLPQAYPGKSLALEPGNPQNPSLFGVDPDSGLFLPSTVPRFASSSGDAEASPMSLTDSGFQNSLYSCMQDTTHELLHGAGQINSSNQTKNFVKVYKSGSVGRSLDISRFSSYHELREELGKMFAIEGLLEDPLRSGWQLVFVDKENDILLLGDDPWESFVNNVWYIKILSPEDVHQMGDHGEGSGGLFPQNPTHL</sequence>
<gene>
    <name type="primary">ARF8</name>
    <name type="synonym">FWF</name>
    <name type="ordered locus">At5g37020</name>
    <name type="ORF">K15O15.5</name>
</gene>
<keyword id="KW-0010">Activator</keyword>
<keyword id="KW-0025">Alternative splicing</keyword>
<keyword id="KW-0927">Auxin signaling pathway</keyword>
<keyword id="KW-0238">DNA-binding</keyword>
<keyword id="KW-0539">Nucleus</keyword>
<keyword id="KW-1185">Reference proteome</keyword>
<keyword id="KW-0804">Transcription</keyword>
<keyword id="KW-0805">Transcription regulation</keyword>
<reference key="1">
    <citation type="journal article" date="1999" name="Proc. Natl. Acad. Sci. U.S.A.">
        <title>Activation and repression of transcription by auxin-response factors.</title>
        <authorList>
            <person name="Ulmasov T."/>
            <person name="Hagen G."/>
            <person name="Guilfoyle T.J."/>
        </authorList>
    </citation>
    <scope>NUCLEOTIDE SEQUENCE [MRNA] (ISOFORM 1)</scope>
    <scope>TRANSCRIPTIONAL ACTIVATOR</scope>
    <source>
        <strain>cv. Columbia</strain>
    </source>
</reference>
<reference key="2">
    <citation type="journal article" date="2005" name="Plant Cell">
        <title>Functional genomic analysis of the AUXIN RESPONSE FACTOR gene family members in Arabidopsis thaliana: unique and overlapping functions of ARF7 and ARF19.</title>
        <authorList>
            <person name="Okushima Y."/>
            <person name="Overvoorde P.J."/>
            <person name="Arima K."/>
            <person name="Alonso J.M."/>
            <person name="Chan A."/>
            <person name="Chang C."/>
            <person name="Ecker J.R."/>
            <person name="Hughes B."/>
            <person name="Lui A."/>
            <person name="Nguyen D."/>
            <person name="Onodera C."/>
            <person name="Quach H."/>
            <person name="Smith A."/>
            <person name="Yu G."/>
            <person name="Theologis A."/>
        </authorList>
    </citation>
    <scope>NUCLEOTIDE SEQUENCE [MRNA] (ISOFORM 1)</scope>
    <source>
        <strain>cv. Columbia</strain>
    </source>
</reference>
<reference key="3">
    <citation type="journal article" date="2000" name="DNA Res.">
        <title>Structural analysis of Arabidopsis thaliana chromosome 5. X. Sequence features of the regions of 3,076,755 bp covered by sixty P1 and TAC clones.</title>
        <authorList>
            <person name="Sato S."/>
            <person name="Nakamura Y."/>
            <person name="Kaneko T."/>
            <person name="Katoh T."/>
            <person name="Asamizu E."/>
            <person name="Kotani H."/>
            <person name="Tabata S."/>
        </authorList>
    </citation>
    <scope>NUCLEOTIDE SEQUENCE [LARGE SCALE GENOMIC DNA]</scope>
    <source>
        <strain>cv. Columbia</strain>
    </source>
</reference>
<reference key="4">
    <citation type="journal article" date="2017" name="Plant J.">
        <title>Araport11: a complete reannotation of the Arabidopsis thaliana reference genome.</title>
        <authorList>
            <person name="Cheng C.Y."/>
            <person name="Krishnakumar V."/>
            <person name="Chan A.P."/>
            <person name="Thibaud-Nissen F."/>
            <person name="Schobel S."/>
            <person name="Town C.D."/>
        </authorList>
    </citation>
    <scope>GENOME REANNOTATION</scope>
    <source>
        <strain>cv. Columbia</strain>
    </source>
</reference>
<reference key="5">
    <citation type="journal article" date="1999" name="Plant J.">
        <title>Dimerization and DNA binding of auxin response factors.</title>
        <authorList>
            <person name="Ulmasov T."/>
            <person name="Hagen G."/>
            <person name="Guilfoyle T.J."/>
        </authorList>
    </citation>
    <scope>DIMERIZATION</scope>
    <scope>TISSUE SPECIFICITY</scope>
</reference>
<reference key="6">
    <citation type="journal article" date="2002" name="Plant Mol. Biol.">
        <title>Auxin-responsive gene expression: genes, promoters and regulatory factors.</title>
        <authorList>
            <person name="Hagen G."/>
            <person name="Guilfoyle T.J."/>
        </authorList>
    </citation>
    <scope>GENE FAMILY</scope>
    <scope>NOMENCLATURE</scope>
    <scope>FUNCTION</scope>
</reference>
<reference key="7">
    <citation type="journal article" date="2005" name="Development">
        <title>Auxin response factors ARF6 and ARF8 promote jasmonic acid production and flower maturation.</title>
        <authorList>
            <person name="Nagpal P."/>
            <person name="Ellis C.M."/>
            <person name="Weber H."/>
            <person name="Ploense S.E."/>
            <person name="Barkawi L.S."/>
            <person name="Guilfoyle T.J."/>
            <person name="Hagen G."/>
            <person name="Alonso J.M."/>
            <person name="Cohen J.D."/>
            <person name="Farmer E.E."/>
            <person name="Ecker J.R."/>
            <person name="Reed J.W."/>
        </authorList>
    </citation>
    <scope>FUNCTION</scope>
    <scope>DEVELOPMENTAL STAGE</scope>
</reference>
<reference key="8">
    <citation type="journal article" date="2006" name="Development">
        <title>Arabidopsis microRNA167 controls patterns of ARF6 and ARF8 expression, and regulates both female and male reproduction.</title>
        <authorList>
            <person name="Wu M.F."/>
            <person name="Tian Q."/>
            <person name="Reed J.W."/>
        </authorList>
    </citation>
    <scope>INDUCTION</scope>
</reference>
<reference key="9">
    <citation type="journal article" date="2006" name="Plant Cell">
        <title>AUXIN RESPONSE FACTOR8 is a negative regulator of fruit initiation in Arabidopsis.</title>
        <authorList>
            <person name="Goetz M."/>
            <person name="Vivian-Smith A."/>
            <person name="Johnson S.D."/>
            <person name="Koltunow A.M."/>
        </authorList>
    </citation>
    <scope>FUNCTION</scope>
    <scope>DEVELOPMENTAL STAGE</scope>
    <scope>DISRUPTION PHENOTYPE</scope>
</reference>
<reference key="10">
    <citation type="journal article" date="2008" name="Trends Plant Sci.">
        <title>The plant B3 superfamily.</title>
        <authorList>
            <person name="Swaminathan K."/>
            <person name="Peterson K."/>
            <person name="Jack T."/>
        </authorList>
    </citation>
    <scope>GENE FAMILY</scope>
</reference>
<name>ARFH_ARATH</name>
<proteinExistence type="evidence at protein level"/>
<evidence type="ECO:0000250" key="1"/>
<evidence type="ECO:0000255" key="2">
    <source>
        <dbReference type="PROSITE-ProRule" id="PRU00326"/>
    </source>
</evidence>
<evidence type="ECO:0000255" key="3">
    <source>
        <dbReference type="PROSITE-ProRule" id="PRU01081"/>
    </source>
</evidence>
<evidence type="ECO:0000256" key="4">
    <source>
        <dbReference type="SAM" id="MobiDB-lite"/>
    </source>
</evidence>
<evidence type="ECO:0000269" key="5">
    <source>
    </source>
</evidence>
<evidence type="ECO:0000269" key="6">
    <source>
    </source>
</evidence>
<evidence type="ECO:0000269" key="7">
    <source>
    </source>
</evidence>
<evidence type="ECO:0000269" key="8">
    <source>
    </source>
</evidence>
<evidence type="ECO:0000269" key="9">
    <source>
    </source>
</evidence>
<evidence type="ECO:0000305" key="10"/>